<comment type="function">
    <text evidence="1">Required for the formation of a threonylcarbamoyl group on adenosine at position 37 (t(6)A37) in tRNAs that read codons beginning with adenine. Is involved in the transfer of the threonylcarbamoyl moiety of threonylcarbamoyl-AMP (TC-AMP) to the N6 group of A37, together with TsaE and TsaB. TsaD likely plays a direct catalytic role in this reaction.</text>
</comment>
<comment type="catalytic activity">
    <reaction evidence="1">
        <text>L-threonylcarbamoyladenylate + adenosine(37) in tRNA = N(6)-L-threonylcarbamoyladenosine(37) in tRNA + AMP + H(+)</text>
        <dbReference type="Rhea" id="RHEA:37059"/>
        <dbReference type="Rhea" id="RHEA-COMP:10162"/>
        <dbReference type="Rhea" id="RHEA-COMP:10163"/>
        <dbReference type="ChEBI" id="CHEBI:15378"/>
        <dbReference type="ChEBI" id="CHEBI:73682"/>
        <dbReference type="ChEBI" id="CHEBI:74411"/>
        <dbReference type="ChEBI" id="CHEBI:74418"/>
        <dbReference type="ChEBI" id="CHEBI:456215"/>
        <dbReference type="EC" id="2.3.1.234"/>
    </reaction>
</comment>
<comment type="cofactor">
    <cofactor evidence="1">
        <name>Fe(2+)</name>
        <dbReference type="ChEBI" id="CHEBI:29033"/>
    </cofactor>
    <text evidence="1">Binds 1 Fe(2+) ion per subunit.</text>
</comment>
<comment type="subcellular location">
    <subcellularLocation>
        <location evidence="1">Cytoplasm</location>
    </subcellularLocation>
</comment>
<comment type="similarity">
    <text evidence="1">Belongs to the KAE1 / TsaD family.</text>
</comment>
<comment type="sequence caution" evidence="2">
    <conflict type="erroneous initiation">
        <sequence resource="EMBL-CDS" id="ABE37708"/>
    </conflict>
</comment>
<organism>
    <name type="scientific">Rhodopseudomonas palustris (strain BisB5)</name>
    <dbReference type="NCBI Taxonomy" id="316057"/>
    <lineage>
        <taxon>Bacteria</taxon>
        <taxon>Pseudomonadati</taxon>
        <taxon>Pseudomonadota</taxon>
        <taxon>Alphaproteobacteria</taxon>
        <taxon>Hyphomicrobiales</taxon>
        <taxon>Nitrobacteraceae</taxon>
        <taxon>Rhodopseudomonas</taxon>
    </lineage>
</organism>
<name>TSAD_RHOPS</name>
<keyword id="KW-0012">Acyltransferase</keyword>
<keyword id="KW-0963">Cytoplasm</keyword>
<keyword id="KW-0408">Iron</keyword>
<keyword id="KW-0479">Metal-binding</keyword>
<keyword id="KW-0808">Transferase</keyword>
<keyword id="KW-0819">tRNA processing</keyword>
<protein>
    <recommendedName>
        <fullName evidence="1">tRNA N6-adenosine threonylcarbamoyltransferase</fullName>
        <ecNumber evidence="1">2.3.1.234</ecNumber>
    </recommendedName>
    <alternativeName>
        <fullName evidence="1">N6-L-threonylcarbamoyladenine synthase</fullName>
        <shortName evidence="1">t(6)A synthase</shortName>
    </alternativeName>
    <alternativeName>
        <fullName evidence="1">t(6)A37 threonylcarbamoyladenosine biosynthesis protein TsaD</fullName>
    </alternativeName>
    <alternativeName>
        <fullName evidence="1">tRNA threonylcarbamoyladenosine biosynthesis protein TsaD</fullName>
    </alternativeName>
</protein>
<reference key="1">
    <citation type="submission" date="2006-03" db="EMBL/GenBank/DDBJ databases">
        <title>Complete sequence of Rhodopseudomonas palustris BisB5.</title>
        <authorList>
            <consortium name="US DOE Joint Genome Institute"/>
            <person name="Copeland A."/>
            <person name="Lucas S."/>
            <person name="Lapidus A."/>
            <person name="Barry K."/>
            <person name="Detter J.C."/>
            <person name="Glavina del Rio T."/>
            <person name="Hammon N."/>
            <person name="Israni S."/>
            <person name="Dalin E."/>
            <person name="Tice H."/>
            <person name="Pitluck S."/>
            <person name="Chain P."/>
            <person name="Malfatti S."/>
            <person name="Shin M."/>
            <person name="Vergez L."/>
            <person name="Schmutz J."/>
            <person name="Larimer F."/>
            <person name="Land M."/>
            <person name="Hauser L."/>
            <person name="Pelletier D.A."/>
            <person name="Kyrpides N."/>
            <person name="Lykidis A."/>
            <person name="Oda Y."/>
            <person name="Harwood C.S."/>
            <person name="Richardson P."/>
        </authorList>
    </citation>
    <scope>NUCLEOTIDE SEQUENCE [LARGE SCALE GENOMIC DNA]</scope>
    <source>
        <strain>BisB5</strain>
    </source>
</reference>
<evidence type="ECO:0000255" key="1">
    <source>
        <dbReference type="HAMAP-Rule" id="MF_01445"/>
    </source>
</evidence>
<evidence type="ECO:0000305" key="2"/>
<dbReference type="EC" id="2.3.1.234" evidence="1"/>
<dbReference type="EMBL" id="CP000283">
    <property type="protein sequence ID" value="ABE37708.1"/>
    <property type="status" value="ALT_INIT"/>
    <property type="molecule type" value="Genomic_DNA"/>
</dbReference>
<dbReference type="SMR" id="Q13DY1"/>
<dbReference type="STRING" id="316057.RPD_0470"/>
<dbReference type="KEGG" id="rpd:RPD_0470"/>
<dbReference type="eggNOG" id="COG0533">
    <property type="taxonomic scope" value="Bacteria"/>
</dbReference>
<dbReference type="HOGENOM" id="CLU_023208_0_2_5"/>
<dbReference type="Proteomes" id="UP000001818">
    <property type="component" value="Chromosome"/>
</dbReference>
<dbReference type="GO" id="GO:0005737">
    <property type="term" value="C:cytoplasm"/>
    <property type="evidence" value="ECO:0007669"/>
    <property type="project" value="UniProtKB-SubCell"/>
</dbReference>
<dbReference type="GO" id="GO:0005506">
    <property type="term" value="F:iron ion binding"/>
    <property type="evidence" value="ECO:0007669"/>
    <property type="project" value="UniProtKB-UniRule"/>
</dbReference>
<dbReference type="GO" id="GO:0061711">
    <property type="term" value="F:N(6)-L-threonylcarbamoyladenine synthase activity"/>
    <property type="evidence" value="ECO:0007669"/>
    <property type="project" value="UniProtKB-EC"/>
</dbReference>
<dbReference type="GO" id="GO:0002949">
    <property type="term" value="P:tRNA threonylcarbamoyladenosine modification"/>
    <property type="evidence" value="ECO:0007669"/>
    <property type="project" value="UniProtKB-UniRule"/>
</dbReference>
<dbReference type="CDD" id="cd24133">
    <property type="entry name" value="ASKHA_NBD_TsaD_bac"/>
    <property type="match status" value="1"/>
</dbReference>
<dbReference type="FunFam" id="3.30.420.40:FF:000012">
    <property type="entry name" value="tRNA N6-adenosine threonylcarbamoyltransferase"/>
    <property type="match status" value="1"/>
</dbReference>
<dbReference type="Gene3D" id="3.30.420.40">
    <property type="match status" value="2"/>
</dbReference>
<dbReference type="HAMAP" id="MF_01445">
    <property type="entry name" value="TsaD"/>
    <property type="match status" value="1"/>
</dbReference>
<dbReference type="InterPro" id="IPR043129">
    <property type="entry name" value="ATPase_NBD"/>
</dbReference>
<dbReference type="InterPro" id="IPR000905">
    <property type="entry name" value="Gcp-like_dom"/>
</dbReference>
<dbReference type="InterPro" id="IPR017861">
    <property type="entry name" value="KAE1/TsaD"/>
</dbReference>
<dbReference type="InterPro" id="IPR017860">
    <property type="entry name" value="Peptidase_M22_CS"/>
</dbReference>
<dbReference type="InterPro" id="IPR022450">
    <property type="entry name" value="TsaD"/>
</dbReference>
<dbReference type="NCBIfam" id="TIGR00329">
    <property type="entry name" value="gcp_kae1"/>
    <property type="match status" value="1"/>
</dbReference>
<dbReference type="NCBIfam" id="TIGR03723">
    <property type="entry name" value="T6A_TsaD_YgjD"/>
    <property type="match status" value="1"/>
</dbReference>
<dbReference type="PANTHER" id="PTHR11735">
    <property type="entry name" value="TRNA N6-ADENOSINE THREONYLCARBAMOYLTRANSFERASE"/>
    <property type="match status" value="1"/>
</dbReference>
<dbReference type="PANTHER" id="PTHR11735:SF6">
    <property type="entry name" value="TRNA N6-ADENOSINE THREONYLCARBAMOYLTRANSFERASE, MITOCHONDRIAL"/>
    <property type="match status" value="1"/>
</dbReference>
<dbReference type="Pfam" id="PF00814">
    <property type="entry name" value="TsaD"/>
    <property type="match status" value="1"/>
</dbReference>
<dbReference type="PRINTS" id="PR00789">
    <property type="entry name" value="OSIALOPTASE"/>
</dbReference>
<dbReference type="SUPFAM" id="SSF53067">
    <property type="entry name" value="Actin-like ATPase domain"/>
    <property type="match status" value="2"/>
</dbReference>
<dbReference type="PROSITE" id="PS01016">
    <property type="entry name" value="GLYCOPROTEASE"/>
    <property type="match status" value="1"/>
</dbReference>
<feature type="chain" id="PRO_0000303519" description="tRNA N6-adenosine threonylcarbamoyltransferase">
    <location>
        <begin position="1"/>
        <end position="363"/>
    </location>
</feature>
<feature type="binding site" evidence="1">
    <location>
        <position position="121"/>
    </location>
    <ligand>
        <name>Fe cation</name>
        <dbReference type="ChEBI" id="CHEBI:24875"/>
    </ligand>
</feature>
<feature type="binding site" evidence="1">
    <location>
        <position position="125"/>
    </location>
    <ligand>
        <name>Fe cation</name>
        <dbReference type="ChEBI" id="CHEBI:24875"/>
    </ligand>
</feature>
<feature type="binding site" evidence="1">
    <location>
        <begin position="143"/>
        <end position="147"/>
    </location>
    <ligand>
        <name>substrate</name>
    </ligand>
</feature>
<feature type="binding site" evidence="1">
    <location>
        <position position="176"/>
    </location>
    <ligand>
        <name>substrate</name>
    </ligand>
</feature>
<feature type="binding site" evidence="1">
    <location>
        <position position="189"/>
    </location>
    <ligand>
        <name>substrate</name>
    </ligand>
</feature>
<feature type="binding site" evidence="1">
    <location>
        <position position="287"/>
    </location>
    <ligand>
        <name>substrate</name>
    </ligand>
</feature>
<feature type="binding site" evidence="1">
    <location>
        <position position="315"/>
    </location>
    <ligand>
        <name>Fe cation</name>
        <dbReference type="ChEBI" id="CHEBI:24875"/>
    </ligand>
</feature>
<sequence>MTSEQTLLVLGIETTCDETAAAVVERRADGSGRILSNIVRSQIDEHAPFGGVVPEIAARAHVDLLDGIVANAMREAGTGFAQLSGVAAAAGPGLIGGVIVGLTTAKAIALVHNTPLIAVNHLEAHALTPRLTDATEFPYCLFLASGGHTQIVAVLGVGDYVRLGTTVDDAIGEAFDKIAKMLGLPYPGGPQVERAAASGDAARFAFPRPMLGRPDANFSLSGLKTAVRNEASRLTPLEPQDINDLCAGFQAAVLDSMADRLGAGLRLFRERFGAPKALVAAGGVAANQAIRRSLREVAAKAQTTLMVPPPALCTDNGAMIAWAGAERLALGLTDTMDAAPRARWLLDANATAPGKFANTRAGF</sequence>
<accession>Q13DY1</accession>
<proteinExistence type="inferred from homology"/>
<gene>
    <name evidence="1" type="primary">tsaD</name>
    <name type="synonym">gcp</name>
    <name type="ordered locus">RPD_0470</name>
</gene>